<geneLocation type="chloroplast"/>
<gene>
    <name evidence="1" type="primary">ndhI</name>
</gene>
<accession>Q8HVI9</accession>
<comment type="function">
    <text evidence="1">NDH shuttles electrons from NAD(P)H:plastoquinone, via FMN and iron-sulfur (Fe-S) centers, to quinones in the photosynthetic chain and possibly in a chloroplast respiratory chain. The immediate electron acceptor for the enzyme in this species is believed to be plastoquinone. Couples the redox reaction to proton translocation, and thus conserves the redox energy in a proton gradient.</text>
</comment>
<comment type="catalytic activity">
    <reaction evidence="1">
        <text>a plastoquinone + NADH + (n+1) H(+)(in) = a plastoquinol + NAD(+) + n H(+)(out)</text>
        <dbReference type="Rhea" id="RHEA:42608"/>
        <dbReference type="Rhea" id="RHEA-COMP:9561"/>
        <dbReference type="Rhea" id="RHEA-COMP:9562"/>
        <dbReference type="ChEBI" id="CHEBI:15378"/>
        <dbReference type="ChEBI" id="CHEBI:17757"/>
        <dbReference type="ChEBI" id="CHEBI:57540"/>
        <dbReference type="ChEBI" id="CHEBI:57945"/>
        <dbReference type="ChEBI" id="CHEBI:62192"/>
    </reaction>
</comment>
<comment type="catalytic activity">
    <reaction evidence="1">
        <text>a plastoquinone + NADPH + (n+1) H(+)(in) = a plastoquinol + NADP(+) + n H(+)(out)</text>
        <dbReference type="Rhea" id="RHEA:42612"/>
        <dbReference type="Rhea" id="RHEA-COMP:9561"/>
        <dbReference type="Rhea" id="RHEA-COMP:9562"/>
        <dbReference type="ChEBI" id="CHEBI:15378"/>
        <dbReference type="ChEBI" id="CHEBI:17757"/>
        <dbReference type="ChEBI" id="CHEBI:57783"/>
        <dbReference type="ChEBI" id="CHEBI:58349"/>
        <dbReference type="ChEBI" id="CHEBI:62192"/>
    </reaction>
</comment>
<comment type="cofactor">
    <cofactor evidence="1">
        <name>[4Fe-4S] cluster</name>
        <dbReference type="ChEBI" id="CHEBI:49883"/>
    </cofactor>
    <text evidence="1">Binds 2 [4Fe-4S] clusters per subunit.</text>
</comment>
<comment type="subunit">
    <text evidence="1">NDH is composed of at least 16 different subunits, 5 of which are encoded in the nucleus.</text>
</comment>
<comment type="subcellular location">
    <subcellularLocation>
        <location evidence="1">Plastid</location>
        <location evidence="1">Chloroplast thylakoid membrane</location>
        <topology evidence="1">Peripheral membrane protein</topology>
    </subcellularLocation>
</comment>
<comment type="similarity">
    <text evidence="1">Belongs to the complex I 23 kDa subunit family.</text>
</comment>
<sequence length="166" mass="19475">MFPMVTEFMNYGQQTVRAARYIGQGFMITLSHANRLPVTIQYPYEKLITSERFRGRIHFEFDKCIACEVCVRVCPIDLPVVDWKLETDIRKKRLLNYSIDFGICIFCGNCVEYCPTNCLSMTEEYELSTYDRHELNYNQIALGRLPMSIIDDYTIRTILNLPEIKT</sequence>
<reference key="1">
    <citation type="submission" date="2003-01" db="EMBL/GenBank/DDBJ databases">
        <title>Chloroplast DNA phylogeny of tribe Heliantheae (Asteraceae).</title>
        <authorList>
            <person name="Panero J.L."/>
            <person name="Baldwin B.G."/>
            <person name="Schilling E.E."/>
            <person name="Clevinger J.A."/>
        </authorList>
    </citation>
    <scope>NUCLEOTIDE SEQUENCE [GENOMIC DNA]</scope>
</reference>
<protein>
    <recommendedName>
        <fullName evidence="1">NAD(P)H-quinone oxidoreductase subunit I, chloroplastic</fullName>
        <ecNumber evidence="1">7.1.1.-</ecNumber>
    </recommendedName>
    <alternativeName>
        <fullName evidence="1">NAD(P)H dehydrogenase subunit I</fullName>
        <shortName evidence="1">NDH subunit I</shortName>
    </alternativeName>
    <alternativeName>
        <fullName evidence="1">NADH-plastoquinone oxidoreductase subunit I</fullName>
    </alternativeName>
</protein>
<name>NDHI_ZINJU</name>
<feature type="chain" id="PRO_0000250870" description="NAD(P)H-quinone oxidoreductase subunit I, chloroplastic">
    <location>
        <begin position="1"/>
        <end position="166"/>
    </location>
</feature>
<feature type="domain" description="4Fe-4S ferredoxin-type 1" evidence="1">
    <location>
        <begin position="55"/>
        <end position="84"/>
    </location>
</feature>
<feature type="domain" description="4Fe-4S ferredoxin-type 2" evidence="1">
    <location>
        <begin position="95"/>
        <end position="124"/>
    </location>
</feature>
<feature type="binding site" evidence="1">
    <location>
        <position position="64"/>
    </location>
    <ligand>
        <name>[4Fe-4S] cluster</name>
        <dbReference type="ChEBI" id="CHEBI:49883"/>
        <label>1</label>
    </ligand>
</feature>
<feature type="binding site" evidence="1">
    <location>
        <position position="67"/>
    </location>
    <ligand>
        <name>[4Fe-4S] cluster</name>
        <dbReference type="ChEBI" id="CHEBI:49883"/>
        <label>1</label>
    </ligand>
</feature>
<feature type="binding site" evidence="1">
    <location>
        <position position="70"/>
    </location>
    <ligand>
        <name>[4Fe-4S] cluster</name>
        <dbReference type="ChEBI" id="CHEBI:49883"/>
        <label>1</label>
    </ligand>
</feature>
<feature type="binding site" evidence="1">
    <location>
        <position position="74"/>
    </location>
    <ligand>
        <name>[4Fe-4S] cluster</name>
        <dbReference type="ChEBI" id="CHEBI:49883"/>
        <label>2</label>
    </ligand>
</feature>
<feature type="binding site" evidence="1">
    <location>
        <position position="104"/>
    </location>
    <ligand>
        <name>[4Fe-4S] cluster</name>
        <dbReference type="ChEBI" id="CHEBI:49883"/>
        <label>2</label>
    </ligand>
</feature>
<feature type="binding site" evidence="1">
    <location>
        <position position="107"/>
    </location>
    <ligand>
        <name>[4Fe-4S] cluster</name>
        <dbReference type="ChEBI" id="CHEBI:49883"/>
        <label>2</label>
    </ligand>
</feature>
<feature type="binding site" evidence="1">
    <location>
        <position position="110"/>
    </location>
    <ligand>
        <name>[4Fe-4S] cluster</name>
        <dbReference type="ChEBI" id="CHEBI:49883"/>
        <label>2</label>
    </ligand>
</feature>
<feature type="binding site" evidence="1">
    <location>
        <position position="114"/>
    </location>
    <ligand>
        <name>[4Fe-4S] cluster</name>
        <dbReference type="ChEBI" id="CHEBI:49883"/>
        <label>1</label>
    </ligand>
</feature>
<organism>
    <name type="scientific">Zinnia juniperifolia</name>
    <dbReference type="NCBI Taxonomy" id="217847"/>
    <lineage>
        <taxon>Eukaryota</taxon>
        <taxon>Viridiplantae</taxon>
        <taxon>Streptophyta</taxon>
        <taxon>Embryophyta</taxon>
        <taxon>Tracheophyta</taxon>
        <taxon>Spermatophyta</taxon>
        <taxon>Magnoliopsida</taxon>
        <taxon>eudicotyledons</taxon>
        <taxon>Gunneridae</taxon>
        <taxon>Pentapetalae</taxon>
        <taxon>asterids</taxon>
        <taxon>campanulids</taxon>
        <taxon>Asterales</taxon>
        <taxon>Asteraceae</taxon>
        <taxon>Asteroideae</taxon>
        <taxon>Heliantheae alliance</taxon>
        <taxon>Heliantheae</taxon>
        <taxon>Zinnia</taxon>
    </lineage>
</organism>
<keyword id="KW-0004">4Fe-4S</keyword>
<keyword id="KW-0150">Chloroplast</keyword>
<keyword id="KW-0408">Iron</keyword>
<keyword id="KW-0411">Iron-sulfur</keyword>
<keyword id="KW-0472">Membrane</keyword>
<keyword id="KW-0479">Metal-binding</keyword>
<keyword id="KW-0520">NAD</keyword>
<keyword id="KW-0521">NADP</keyword>
<keyword id="KW-0934">Plastid</keyword>
<keyword id="KW-0618">Plastoquinone</keyword>
<keyword id="KW-0874">Quinone</keyword>
<keyword id="KW-0677">Repeat</keyword>
<keyword id="KW-0793">Thylakoid</keyword>
<keyword id="KW-1278">Translocase</keyword>
<dbReference type="EC" id="7.1.1.-" evidence="1"/>
<dbReference type="EMBL" id="AF383874">
    <property type="protein sequence ID" value="AAN61815.1"/>
    <property type="molecule type" value="Genomic_DNA"/>
</dbReference>
<dbReference type="SMR" id="Q8HVI9"/>
<dbReference type="GO" id="GO:0009535">
    <property type="term" value="C:chloroplast thylakoid membrane"/>
    <property type="evidence" value="ECO:0007669"/>
    <property type="project" value="UniProtKB-SubCell"/>
</dbReference>
<dbReference type="GO" id="GO:0051539">
    <property type="term" value="F:4 iron, 4 sulfur cluster binding"/>
    <property type="evidence" value="ECO:0007669"/>
    <property type="project" value="UniProtKB-KW"/>
</dbReference>
<dbReference type="GO" id="GO:0005506">
    <property type="term" value="F:iron ion binding"/>
    <property type="evidence" value="ECO:0007669"/>
    <property type="project" value="UniProtKB-UniRule"/>
</dbReference>
<dbReference type="GO" id="GO:0008137">
    <property type="term" value="F:NADH dehydrogenase (ubiquinone) activity"/>
    <property type="evidence" value="ECO:0007669"/>
    <property type="project" value="InterPro"/>
</dbReference>
<dbReference type="GO" id="GO:0048038">
    <property type="term" value="F:quinone binding"/>
    <property type="evidence" value="ECO:0007669"/>
    <property type="project" value="UniProtKB-KW"/>
</dbReference>
<dbReference type="GO" id="GO:0019684">
    <property type="term" value="P:photosynthesis, light reaction"/>
    <property type="evidence" value="ECO:0007669"/>
    <property type="project" value="UniProtKB-UniRule"/>
</dbReference>
<dbReference type="FunFam" id="3.30.70.3270:FF:000006">
    <property type="entry name" value="NAD(P)H-quinone oxidoreductase subunit I, chloroplastic"/>
    <property type="match status" value="1"/>
</dbReference>
<dbReference type="Gene3D" id="3.30.70.3270">
    <property type="match status" value="1"/>
</dbReference>
<dbReference type="HAMAP" id="MF_01351">
    <property type="entry name" value="NDH1_NuoI"/>
    <property type="match status" value="1"/>
</dbReference>
<dbReference type="InterPro" id="IPR017896">
    <property type="entry name" value="4Fe4S_Fe-S-bd"/>
</dbReference>
<dbReference type="InterPro" id="IPR017900">
    <property type="entry name" value="4Fe4S_Fe_S_CS"/>
</dbReference>
<dbReference type="InterPro" id="IPR010226">
    <property type="entry name" value="NADH_quinone_OxRdtase_chainI"/>
</dbReference>
<dbReference type="InterPro" id="IPR004497">
    <property type="entry name" value="NDHI"/>
</dbReference>
<dbReference type="NCBIfam" id="TIGR00403">
    <property type="entry name" value="ndhI"/>
    <property type="match status" value="1"/>
</dbReference>
<dbReference type="NCBIfam" id="TIGR01971">
    <property type="entry name" value="NuoI"/>
    <property type="match status" value="1"/>
</dbReference>
<dbReference type="NCBIfam" id="NF004537">
    <property type="entry name" value="PRK05888.1-3"/>
    <property type="match status" value="1"/>
</dbReference>
<dbReference type="PANTHER" id="PTHR47275">
    <property type="entry name" value="NAD(P)H-QUINONE OXIDOREDUCTASE SUBUNIT I, CHLOROPLASTIC"/>
    <property type="match status" value="1"/>
</dbReference>
<dbReference type="PANTHER" id="PTHR47275:SF1">
    <property type="entry name" value="NAD(P)H-QUINONE OXIDOREDUCTASE SUBUNIT I, CHLOROPLASTIC"/>
    <property type="match status" value="1"/>
</dbReference>
<dbReference type="Pfam" id="PF00037">
    <property type="entry name" value="Fer4"/>
    <property type="match status" value="2"/>
</dbReference>
<dbReference type="SUPFAM" id="SSF54862">
    <property type="entry name" value="4Fe-4S ferredoxins"/>
    <property type="match status" value="1"/>
</dbReference>
<dbReference type="PROSITE" id="PS00198">
    <property type="entry name" value="4FE4S_FER_1"/>
    <property type="match status" value="2"/>
</dbReference>
<dbReference type="PROSITE" id="PS51379">
    <property type="entry name" value="4FE4S_FER_2"/>
    <property type="match status" value="2"/>
</dbReference>
<proteinExistence type="inferred from homology"/>
<evidence type="ECO:0000255" key="1">
    <source>
        <dbReference type="HAMAP-Rule" id="MF_01351"/>
    </source>
</evidence>